<evidence type="ECO:0000250" key="1"/>
<evidence type="ECO:0000255" key="2">
    <source>
        <dbReference type="PROSITE-ProRule" id="PRU01023"/>
    </source>
</evidence>
<evidence type="ECO:0000305" key="3"/>
<comment type="function">
    <text evidence="1">Specifically methylates the cytosine at position 967 (m5C967) of 16S rRNA.</text>
</comment>
<comment type="catalytic activity">
    <reaction>
        <text>cytidine(967) in 16S rRNA + S-adenosyl-L-methionine = 5-methylcytidine(967) in 16S rRNA + S-adenosyl-L-homocysteine + H(+)</text>
        <dbReference type="Rhea" id="RHEA:42748"/>
        <dbReference type="Rhea" id="RHEA-COMP:10219"/>
        <dbReference type="Rhea" id="RHEA-COMP:10220"/>
        <dbReference type="ChEBI" id="CHEBI:15378"/>
        <dbReference type="ChEBI" id="CHEBI:57856"/>
        <dbReference type="ChEBI" id="CHEBI:59789"/>
        <dbReference type="ChEBI" id="CHEBI:74483"/>
        <dbReference type="ChEBI" id="CHEBI:82748"/>
        <dbReference type="EC" id="2.1.1.176"/>
    </reaction>
</comment>
<comment type="subcellular location">
    <subcellularLocation>
        <location evidence="3">Cytoplasm</location>
    </subcellularLocation>
</comment>
<comment type="similarity">
    <text evidence="2">Belongs to the class I-like SAM-binding methyltransferase superfamily. RsmB/NOP family.</text>
</comment>
<keyword id="KW-0963">Cytoplasm</keyword>
<keyword id="KW-0489">Methyltransferase</keyword>
<keyword id="KW-1185">Reference proteome</keyword>
<keyword id="KW-0690">Ribosome biogenesis</keyword>
<keyword id="KW-0694">RNA-binding</keyword>
<keyword id="KW-0698">rRNA processing</keyword>
<keyword id="KW-0949">S-adenosyl-L-methionine</keyword>
<keyword id="KW-0808">Transferase</keyword>
<protein>
    <recommendedName>
        <fullName>Ribosomal RNA small subunit methyltransferase B</fullName>
        <ecNumber>2.1.1.176</ecNumber>
    </recommendedName>
    <alternativeName>
        <fullName>16S rRNA m5C967 methyltransferase</fullName>
    </alternativeName>
    <alternativeName>
        <fullName>rRNA (cytosine-C(5)-)-methyltransferase RsmB</fullName>
    </alternativeName>
</protein>
<reference key="1">
    <citation type="journal article" date="2000" name="Nature">
        <title>DNA sequence of both chromosomes of the cholera pathogen Vibrio cholerae.</title>
        <authorList>
            <person name="Heidelberg J.F."/>
            <person name="Eisen J.A."/>
            <person name="Nelson W.C."/>
            <person name="Clayton R.A."/>
            <person name="Gwinn M.L."/>
            <person name="Dodson R.J."/>
            <person name="Haft D.H."/>
            <person name="Hickey E.K."/>
            <person name="Peterson J.D."/>
            <person name="Umayam L.A."/>
            <person name="Gill S.R."/>
            <person name="Nelson K.E."/>
            <person name="Read T.D."/>
            <person name="Tettelin H."/>
            <person name="Richardson D.L."/>
            <person name="Ermolaeva M.D."/>
            <person name="Vamathevan J.J."/>
            <person name="Bass S."/>
            <person name="Qin H."/>
            <person name="Dragoi I."/>
            <person name="Sellers P."/>
            <person name="McDonald L.A."/>
            <person name="Utterback T.R."/>
            <person name="Fleischmann R.D."/>
            <person name="Nierman W.C."/>
            <person name="White O."/>
            <person name="Salzberg S.L."/>
            <person name="Smith H.O."/>
            <person name="Colwell R.R."/>
            <person name="Mekalanos J.J."/>
            <person name="Venter J.C."/>
            <person name="Fraser C.M."/>
        </authorList>
    </citation>
    <scope>NUCLEOTIDE SEQUENCE [LARGE SCALE GENOMIC DNA]</scope>
    <source>
        <strain>ATCC 39315 / El Tor Inaba N16961</strain>
    </source>
</reference>
<sequence length="434" mass="48340">MAFCLGFIMNVRAAAASALYQVVDLGHSLSNALPAAQQQIRPRDHALLQEICYGVLRQLPRLESISQALMGKPLKGKQRVFHFLILVGLYQLSFMRIPAHAAVGETVEGAQDLKGPRLRGLINAVLRNYQRDQEGLDAQATSHDAGRYGHPGWLLKLLKESYPEQWQQIVEANNSKAPMWLRVNHQHHTRAEYQALLEQAGIVTTPHAQAEDALCLETPCDVHQLPGFAEGWVSVQDAAAQLALTYLAPQAGELILDCCAAPGGKTAHILERTPESQVVAIDCDETRLKRVRENLQRLELTAQVICGDARYPQQWWQGEQFDRILLDAPCSATGVIRRHPDIKWLRRADDIAALAELQREILDAMWQQLKPGGSLVYATCSITPQENRLQVKAFLERTPDARLVGSDPAQPGRQILPGEEAMDGFYYAVLSKQH</sequence>
<gene>
    <name type="primary">rsmB</name>
    <name type="synonym">rrmB</name>
    <name type="ordered locus">VC_0044</name>
</gene>
<accession>Q9KVU5</accession>
<feature type="chain" id="PRO_0000211806" description="Ribosomal RNA small subunit methyltransferase B">
    <location>
        <begin position="1"/>
        <end position="434"/>
    </location>
</feature>
<feature type="active site" description="Nucleophile" evidence="2">
    <location>
        <position position="380"/>
    </location>
</feature>
<feature type="binding site" evidence="2">
    <location>
        <begin position="259"/>
        <end position="265"/>
    </location>
    <ligand>
        <name>S-adenosyl-L-methionine</name>
        <dbReference type="ChEBI" id="CHEBI:59789"/>
    </ligand>
</feature>
<feature type="binding site" evidence="2">
    <location>
        <position position="282"/>
    </location>
    <ligand>
        <name>S-adenosyl-L-methionine</name>
        <dbReference type="ChEBI" id="CHEBI:59789"/>
    </ligand>
</feature>
<feature type="binding site" evidence="2">
    <location>
        <position position="308"/>
    </location>
    <ligand>
        <name>S-adenosyl-L-methionine</name>
        <dbReference type="ChEBI" id="CHEBI:59789"/>
    </ligand>
</feature>
<feature type="binding site" evidence="2">
    <location>
        <position position="327"/>
    </location>
    <ligand>
        <name>S-adenosyl-L-methionine</name>
        <dbReference type="ChEBI" id="CHEBI:59789"/>
    </ligand>
</feature>
<organism>
    <name type="scientific">Vibrio cholerae serotype O1 (strain ATCC 39315 / El Tor Inaba N16961)</name>
    <dbReference type="NCBI Taxonomy" id="243277"/>
    <lineage>
        <taxon>Bacteria</taxon>
        <taxon>Pseudomonadati</taxon>
        <taxon>Pseudomonadota</taxon>
        <taxon>Gammaproteobacteria</taxon>
        <taxon>Vibrionales</taxon>
        <taxon>Vibrionaceae</taxon>
        <taxon>Vibrio</taxon>
    </lineage>
</organism>
<proteinExistence type="inferred from homology"/>
<name>RSMB_VIBCH</name>
<dbReference type="EC" id="2.1.1.176"/>
<dbReference type="EMBL" id="AE003852">
    <property type="protein sequence ID" value="AAF93222.1"/>
    <property type="molecule type" value="Genomic_DNA"/>
</dbReference>
<dbReference type="PIR" id="G82372">
    <property type="entry name" value="G82372"/>
</dbReference>
<dbReference type="RefSeq" id="NP_229703.1">
    <property type="nucleotide sequence ID" value="NC_002505.1"/>
</dbReference>
<dbReference type="SMR" id="Q9KVU5"/>
<dbReference type="STRING" id="243277.VC_0044"/>
<dbReference type="DNASU" id="2614440"/>
<dbReference type="EnsemblBacteria" id="AAF93222">
    <property type="protein sequence ID" value="AAF93222"/>
    <property type="gene ID" value="VC_0044"/>
</dbReference>
<dbReference type="KEGG" id="vch:VC_0044"/>
<dbReference type="PATRIC" id="fig|243277.26.peg.43"/>
<dbReference type="eggNOG" id="COG0144">
    <property type="taxonomic scope" value="Bacteria"/>
</dbReference>
<dbReference type="eggNOG" id="COG0781">
    <property type="taxonomic scope" value="Bacteria"/>
</dbReference>
<dbReference type="HOGENOM" id="CLU_005316_0_4_6"/>
<dbReference type="Proteomes" id="UP000000584">
    <property type="component" value="Chromosome 1"/>
</dbReference>
<dbReference type="GO" id="GO:0005829">
    <property type="term" value="C:cytosol"/>
    <property type="evidence" value="ECO:0000318"/>
    <property type="project" value="GO_Central"/>
</dbReference>
<dbReference type="GO" id="GO:0003723">
    <property type="term" value="F:RNA binding"/>
    <property type="evidence" value="ECO:0007669"/>
    <property type="project" value="UniProtKB-KW"/>
</dbReference>
<dbReference type="GO" id="GO:0009383">
    <property type="term" value="F:rRNA (cytosine-C5-)-methyltransferase activity"/>
    <property type="evidence" value="ECO:0000318"/>
    <property type="project" value="GO_Central"/>
</dbReference>
<dbReference type="GO" id="GO:0006355">
    <property type="term" value="P:regulation of DNA-templated transcription"/>
    <property type="evidence" value="ECO:0007669"/>
    <property type="project" value="InterPro"/>
</dbReference>
<dbReference type="GO" id="GO:0070475">
    <property type="term" value="P:rRNA base methylation"/>
    <property type="evidence" value="ECO:0000318"/>
    <property type="project" value="GO_Central"/>
</dbReference>
<dbReference type="CDD" id="cd02440">
    <property type="entry name" value="AdoMet_MTases"/>
    <property type="match status" value="1"/>
</dbReference>
<dbReference type="CDD" id="cd00620">
    <property type="entry name" value="Methyltransferase_Sun"/>
    <property type="match status" value="1"/>
</dbReference>
<dbReference type="FunFam" id="1.10.940.10:FF:000002">
    <property type="entry name" value="Ribosomal RNA small subunit methyltransferase B"/>
    <property type="match status" value="1"/>
</dbReference>
<dbReference type="FunFam" id="3.30.70.1170:FF:000002">
    <property type="entry name" value="Ribosomal RNA small subunit methyltransferase B"/>
    <property type="match status" value="1"/>
</dbReference>
<dbReference type="FunFam" id="3.40.50.150:FF:000022">
    <property type="entry name" value="Ribosomal RNA small subunit methyltransferase B"/>
    <property type="match status" value="1"/>
</dbReference>
<dbReference type="Gene3D" id="1.10.287.730">
    <property type="entry name" value="Helix hairpin bin"/>
    <property type="match status" value="1"/>
</dbReference>
<dbReference type="Gene3D" id="1.10.940.10">
    <property type="entry name" value="NusB-like"/>
    <property type="match status" value="1"/>
</dbReference>
<dbReference type="Gene3D" id="3.30.70.1170">
    <property type="entry name" value="Sun protein, domain 3"/>
    <property type="match status" value="1"/>
</dbReference>
<dbReference type="Gene3D" id="3.40.50.150">
    <property type="entry name" value="Vaccinia Virus protein VP39"/>
    <property type="match status" value="1"/>
</dbReference>
<dbReference type="InterPro" id="IPR049560">
    <property type="entry name" value="MeTrfase_RsmB-F_NOP2_cat"/>
</dbReference>
<dbReference type="InterPro" id="IPR001678">
    <property type="entry name" value="MeTrfase_RsmB-F_NOP2_dom"/>
</dbReference>
<dbReference type="InterPro" id="IPR035926">
    <property type="entry name" value="NusB-like_sf"/>
</dbReference>
<dbReference type="InterPro" id="IPR006027">
    <property type="entry name" value="NusB_RsmB_TIM44"/>
</dbReference>
<dbReference type="InterPro" id="IPR023267">
    <property type="entry name" value="RCMT"/>
</dbReference>
<dbReference type="InterPro" id="IPR004573">
    <property type="entry name" value="rRNA_ssu_MeTfrase_B"/>
</dbReference>
<dbReference type="InterPro" id="IPR054728">
    <property type="entry name" value="RsmB-like_ferredoxin"/>
</dbReference>
<dbReference type="InterPro" id="IPR048019">
    <property type="entry name" value="RsmB-like_N"/>
</dbReference>
<dbReference type="InterPro" id="IPR018314">
    <property type="entry name" value="RsmB/NOL1/NOP2-like_CS"/>
</dbReference>
<dbReference type="InterPro" id="IPR029063">
    <property type="entry name" value="SAM-dependent_MTases_sf"/>
</dbReference>
<dbReference type="NCBIfam" id="NF008149">
    <property type="entry name" value="PRK10901.1"/>
    <property type="match status" value="1"/>
</dbReference>
<dbReference type="NCBIfam" id="NF011494">
    <property type="entry name" value="PRK14902.1"/>
    <property type="match status" value="1"/>
</dbReference>
<dbReference type="NCBIfam" id="TIGR00563">
    <property type="entry name" value="rsmB"/>
    <property type="match status" value="1"/>
</dbReference>
<dbReference type="PANTHER" id="PTHR22807:SF61">
    <property type="entry name" value="NOL1_NOP2_SUN FAMILY PROTEIN _ ANTITERMINATION NUSB DOMAIN-CONTAINING PROTEIN"/>
    <property type="match status" value="1"/>
</dbReference>
<dbReference type="PANTHER" id="PTHR22807">
    <property type="entry name" value="NOP2 YEAST -RELATED NOL1/NOP2/FMU SUN DOMAIN-CONTAINING"/>
    <property type="match status" value="1"/>
</dbReference>
<dbReference type="Pfam" id="PF01189">
    <property type="entry name" value="Methyltr_RsmB-F"/>
    <property type="match status" value="1"/>
</dbReference>
<dbReference type="Pfam" id="PF01029">
    <property type="entry name" value="NusB"/>
    <property type="match status" value="1"/>
</dbReference>
<dbReference type="Pfam" id="PF22458">
    <property type="entry name" value="RsmF-B_ferredox"/>
    <property type="match status" value="1"/>
</dbReference>
<dbReference type="PRINTS" id="PR02008">
    <property type="entry name" value="RCMTFAMILY"/>
</dbReference>
<dbReference type="SUPFAM" id="SSF48013">
    <property type="entry name" value="NusB-like"/>
    <property type="match status" value="1"/>
</dbReference>
<dbReference type="SUPFAM" id="SSF53335">
    <property type="entry name" value="S-adenosyl-L-methionine-dependent methyltransferases"/>
    <property type="match status" value="1"/>
</dbReference>
<dbReference type="PROSITE" id="PS01153">
    <property type="entry name" value="NOL1_NOP2_SUN"/>
    <property type="match status" value="1"/>
</dbReference>
<dbReference type="PROSITE" id="PS51686">
    <property type="entry name" value="SAM_MT_RSMB_NOP"/>
    <property type="match status" value="1"/>
</dbReference>